<organism>
    <name type="scientific">Escherichia coli (strain K12)</name>
    <dbReference type="NCBI Taxonomy" id="83333"/>
    <lineage>
        <taxon>Bacteria</taxon>
        <taxon>Pseudomonadati</taxon>
        <taxon>Pseudomonadota</taxon>
        <taxon>Gammaproteobacteria</taxon>
        <taxon>Enterobacterales</taxon>
        <taxon>Enterobacteriaceae</taxon>
        <taxon>Escherichia</taxon>
    </lineage>
</organism>
<feature type="initiator methionine" description="Removed" evidence="2 3">
    <location>
        <position position="1"/>
    </location>
</feature>
<feature type="chain" id="PRO_0000201354" description="UTP--glucose-1-phosphate uridylyltransferase">
    <location>
        <begin position="2"/>
        <end position="302"/>
    </location>
</feature>
<feature type="strand" evidence="7">
    <location>
        <begin position="10"/>
        <end position="14"/>
    </location>
</feature>
<feature type="helix" evidence="7">
    <location>
        <begin position="20"/>
        <end position="22"/>
    </location>
</feature>
<feature type="turn" evidence="7">
    <location>
        <begin position="23"/>
        <end position="26"/>
    </location>
</feature>
<feature type="strand" evidence="7">
    <location>
        <begin position="27"/>
        <end position="29"/>
    </location>
</feature>
<feature type="helix" evidence="7">
    <location>
        <begin position="31"/>
        <end position="33"/>
    </location>
</feature>
<feature type="helix" evidence="7">
    <location>
        <begin position="41"/>
        <end position="51"/>
    </location>
</feature>
<feature type="strand" evidence="7">
    <location>
        <begin position="56"/>
        <end position="61"/>
    </location>
</feature>
<feature type="helix" evidence="7">
    <location>
        <begin position="63"/>
        <end position="65"/>
    </location>
</feature>
<feature type="helix" evidence="7">
    <location>
        <begin position="66"/>
        <end position="72"/>
    </location>
</feature>
<feature type="helix" evidence="7">
    <location>
        <begin position="76"/>
        <end position="82"/>
    </location>
</feature>
<feature type="helix" evidence="7">
    <location>
        <begin position="89"/>
        <end position="96"/>
    </location>
</feature>
<feature type="strand" evidence="7">
    <location>
        <begin position="103"/>
        <end position="108"/>
    </location>
</feature>
<feature type="helix" evidence="7">
    <location>
        <begin position="115"/>
        <end position="121"/>
    </location>
</feature>
<feature type="helix" evidence="7">
    <location>
        <begin position="123"/>
        <end position="126"/>
    </location>
</feature>
<feature type="strand" evidence="7">
    <location>
        <begin position="131"/>
        <end position="134"/>
    </location>
</feature>
<feature type="strand" evidence="7">
    <location>
        <begin position="138"/>
        <end position="140"/>
    </location>
</feature>
<feature type="turn" evidence="7">
    <location>
        <begin position="147"/>
        <end position="149"/>
    </location>
</feature>
<feature type="helix" evidence="7">
    <location>
        <begin position="152"/>
        <end position="162"/>
    </location>
</feature>
<feature type="strand" evidence="7">
    <location>
        <begin position="165"/>
        <end position="171"/>
    </location>
</feature>
<feature type="helix" evidence="7">
    <location>
        <begin position="175"/>
        <end position="177"/>
    </location>
</feature>
<feature type="strand" evidence="7">
    <location>
        <begin position="178"/>
        <end position="182"/>
    </location>
</feature>
<feature type="strand" evidence="7">
    <location>
        <begin position="193"/>
        <end position="196"/>
    </location>
</feature>
<feature type="strand" evidence="7">
    <location>
        <begin position="198"/>
        <end position="202"/>
    </location>
</feature>
<feature type="turn" evidence="7">
    <location>
        <begin position="205"/>
        <end position="207"/>
    </location>
</feature>
<feature type="strand" evidence="7">
    <location>
        <begin position="211"/>
        <end position="220"/>
    </location>
</feature>
<feature type="helix" evidence="7">
    <location>
        <begin position="224"/>
        <end position="228"/>
    </location>
</feature>
<feature type="helix" evidence="7">
    <location>
        <begin position="235"/>
        <end position="237"/>
    </location>
</feature>
<feature type="helix" evidence="7">
    <location>
        <begin position="241"/>
        <end position="251"/>
    </location>
</feature>
<feature type="strand" evidence="7">
    <location>
        <begin position="254"/>
        <end position="258"/>
    </location>
</feature>
<feature type="strand" evidence="7">
    <location>
        <begin position="263"/>
        <end position="265"/>
    </location>
</feature>
<feature type="helix" evidence="7">
    <location>
        <begin position="269"/>
        <end position="282"/>
    </location>
</feature>
<feature type="turn" evidence="7">
    <location>
        <begin position="284"/>
        <end position="286"/>
    </location>
</feature>
<feature type="helix" evidence="7">
    <location>
        <begin position="287"/>
        <end position="297"/>
    </location>
</feature>
<proteinExistence type="evidence at protein level"/>
<keyword id="KW-0002">3D-structure</keyword>
<keyword id="KW-0903">Direct protein sequencing</keyword>
<keyword id="KW-0460">Magnesium</keyword>
<keyword id="KW-0548">Nucleotidyltransferase</keyword>
<keyword id="KW-1185">Reference proteome</keyword>
<keyword id="KW-0808">Transferase</keyword>
<reference key="1">
    <citation type="journal article" date="1992" name="J. Bacteriol.">
        <title>Multicopy suppression: an approach to understanding intracellular functioning of the protein export system.</title>
        <authorList>
            <person name="Ueguchi C."/>
            <person name="Ito K."/>
        </authorList>
    </citation>
    <scope>NUCLEOTIDE SEQUENCE [GENOMIC DNA]</scope>
    <source>
        <strain>K12</strain>
    </source>
</reference>
<reference key="2">
    <citation type="journal article" date="1994" name="J. Bacteriol.">
        <title>UTP: alpha-D-glucose-1-phosphate uridylyltransferase of Escherichia coli: isolation and DNA sequence of the galU gene and purification of the enzyme.</title>
        <authorList>
            <person name="Weissborn A.C."/>
            <person name="Liu Q."/>
            <person name="Rumley M.K."/>
            <person name="Kennedy E.P."/>
        </authorList>
    </citation>
    <scope>NUCLEOTIDE SEQUENCE [GENOMIC DNA]</scope>
    <scope>PROTEIN SEQUENCE OF 2-11</scope>
    <scope>SUBUNIT</scope>
    <source>
        <strain>K12</strain>
    </source>
</reference>
<reference key="3">
    <citation type="journal article" date="1994" name="J. Biochem.">
        <title>Overproduction and characterization of recombinant UDP-glucose pyrophosphorylase from Escherichia coli K-12.</title>
        <authorList>
            <person name="Hossain S.A."/>
            <person name="Tanizawa K."/>
            <person name="Kazuta Y."/>
            <person name="Fukui T."/>
        </authorList>
    </citation>
    <scope>NUCLEOTIDE SEQUENCE [GENOMIC DNA]</scope>
    <scope>PARTIAL PROTEIN SEQUENCE</scope>
    <scope>CATALYTIC ACTIVITY</scope>
    <scope>COFACTOR</scope>
    <source>
        <strain>K12</strain>
    </source>
</reference>
<reference key="4">
    <citation type="journal article" date="1996" name="DNA Res.">
        <title>A 718-kb DNA sequence of the Escherichia coli K-12 genome corresponding to the 12.7-28.0 min region on the linkage map.</title>
        <authorList>
            <person name="Oshima T."/>
            <person name="Aiba H."/>
            <person name="Baba T."/>
            <person name="Fujita K."/>
            <person name="Hayashi K."/>
            <person name="Honjo A."/>
            <person name="Ikemoto K."/>
            <person name="Inada T."/>
            <person name="Itoh T."/>
            <person name="Kajihara M."/>
            <person name="Kanai K."/>
            <person name="Kashimoto K."/>
            <person name="Kimura S."/>
            <person name="Kitagawa M."/>
            <person name="Makino K."/>
            <person name="Masuda S."/>
            <person name="Miki T."/>
            <person name="Mizobuchi K."/>
            <person name="Mori H."/>
            <person name="Motomura K."/>
            <person name="Nakamura Y."/>
            <person name="Nashimoto H."/>
            <person name="Nishio Y."/>
            <person name="Saito N."/>
            <person name="Sampei G."/>
            <person name="Seki Y."/>
            <person name="Tagami H."/>
            <person name="Takemoto K."/>
            <person name="Wada C."/>
            <person name="Yamamoto Y."/>
            <person name="Yano M."/>
            <person name="Horiuchi T."/>
        </authorList>
    </citation>
    <scope>NUCLEOTIDE SEQUENCE [LARGE SCALE GENOMIC DNA]</scope>
    <source>
        <strain>K12 / W3110 / ATCC 27325 / DSM 5911</strain>
    </source>
</reference>
<reference key="5">
    <citation type="journal article" date="1997" name="Science">
        <title>The complete genome sequence of Escherichia coli K-12.</title>
        <authorList>
            <person name="Blattner F.R."/>
            <person name="Plunkett G. III"/>
            <person name="Bloch C.A."/>
            <person name="Perna N.T."/>
            <person name="Burland V."/>
            <person name="Riley M."/>
            <person name="Collado-Vides J."/>
            <person name="Glasner J.D."/>
            <person name="Rode C.K."/>
            <person name="Mayhew G.F."/>
            <person name="Gregor J."/>
            <person name="Davis N.W."/>
            <person name="Kirkpatrick H.A."/>
            <person name="Goeden M.A."/>
            <person name="Rose D.J."/>
            <person name="Mau B."/>
            <person name="Shao Y."/>
        </authorList>
    </citation>
    <scope>NUCLEOTIDE SEQUENCE [LARGE SCALE GENOMIC DNA]</scope>
    <source>
        <strain>K12 / MG1655 / ATCC 47076</strain>
    </source>
</reference>
<reference key="6">
    <citation type="journal article" date="2006" name="Mol. Syst. Biol.">
        <title>Highly accurate genome sequences of Escherichia coli K-12 strains MG1655 and W3110.</title>
        <authorList>
            <person name="Hayashi K."/>
            <person name="Morooka N."/>
            <person name="Yamamoto Y."/>
            <person name="Fujita K."/>
            <person name="Isono K."/>
            <person name="Choi S."/>
            <person name="Ohtsubo E."/>
            <person name="Baba T."/>
            <person name="Wanner B.L."/>
            <person name="Mori H."/>
            <person name="Horiuchi T."/>
        </authorList>
    </citation>
    <scope>NUCLEOTIDE SEQUENCE [LARGE SCALE GENOMIC DNA]</scope>
    <source>
        <strain>K12 / W3110 / ATCC 27325 / DSM 5911</strain>
    </source>
</reference>
<reference key="7">
    <citation type="journal article" date="1997" name="Electrophoresis">
        <title>Comparing the predicted and observed properties of proteins encoded in the genome of Escherichia coli K-12.</title>
        <authorList>
            <person name="Link A.J."/>
            <person name="Robison K."/>
            <person name="Church G.M."/>
        </authorList>
    </citation>
    <scope>PROTEIN SEQUENCE OF 2-18</scope>
    <source>
        <strain>K12 / EMG2</strain>
    </source>
</reference>
<evidence type="ECO:0000269" key="1">
    <source>
    </source>
</evidence>
<evidence type="ECO:0000269" key="2">
    <source>
    </source>
</evidence>
<evidence type="ECO:0000269" key="3">
    <source>
    </source>
</evidence>
<evidence type="ECO:0000303" key="4">
    <source>
    </source>
</evidence>
<evidence type="ECO:0000303" key="5">
    <source>
    </source>
</evidence>
<evidence type="ECO:0000305" key="6"/>
<evidence type="ECO:0007829" key="7">
    <source>
        <dbReference type="PDB" id="2E3D"/>
    </source>
</evidence>
<accession>P0AEP3</accession>
<accession>P25520</accession>
<gene>
    <name type="primary">galU</name>
    <name type="synonym">ychD</name>
    <name type="ordered locus">b1236</name>
    <name type="ordered locus">JW1224</name>
</gene>
<comment type="function">
    <text>May play a role in stationary phase survival.</text>
</comment>
<comment type="catalytic activity">
    <reaction evidence="1">
        <text>alpha-D-glucose 1-phosphate + UTP + H(+) = UDP-alpha-D-glucose + diphosphate</text>
        <dbReference type="Rhea" id="RHEA:19889"/>
        <dbReference type="ChEBI" id="CHEBI:15378"/>
        <dbReference type="ChEBI" id="CHEBI:33019"/>
        <dbReference type="ChEBI" id="CHEBI:46398"/>
        <dbReference type="ChEBI" id="CHEBI:58601"/>
        <dbReference type="ChEBI" id="CHEBI:58885"/>
        <dbReference type="EC" id="2.7.7.9"/>
    </reaction>
</comment>
<comment type="cofactor">
    <cofactor evidence="1">
        <name>Mg(2+)</name>
        <dbReference type="ChEBI" id="CHEBI:18420"/>
    </cofactor>
</comment>
<comment type="subunit">
    <text evidence="2">Homotetramer or homopentamer.</text>
</comment>
<comment type="similarity">
    <text evidence="6">Belongs to the UDPGP type 2 family.</text>
</comment>
<sequence>MAAINTKVKKAVIPVAGLGTRMLPATKAIPKEMLPLVDKPLIQYVVNECIAAGITEIVLVTHSSKNSIENHFDTSFELEAMLEKRVKRQLLDEVQSICPPHVTIMQVRQGLAKGLGHAVLCAHPVVGDEPVAVILPDVILDEYESDLSQDNLAEMIRRFDETGHSQIMVEPVADVTAYGVVDCKGVELAPGESVPMVGVVEKPKADVAPSNLAIVGRYVLSADIWPLLAKTPPGAGDEIQLTDAIDMLIEKETVEAYHMKGKSHDCGNKLGYMQAFVEYGIRHNTLGTEFKAWLEEEMGIKK</sequence>
<dbReference type="EC" id="2.7.7.9" evidence="1"/>
<dbReference type="EMBL" id="X59940">
    <property type="protein sequence ID" value="CAA42564.1"/>
    <property type="molecule type" value="Genomic_DNA"/>
</dbReference>
<dbReference type="EMBL" id="M98830">
    <property type="protein sequence ID" value="AAA20118.1"/>
    <property type="molecule type" value="Unassigned_DNA"/>
</dbReference>
<dbReference type="EMBL" id="U00096">
    <property type="protein sequence ID" value="AAC74318.1"/>
    <property type="molecule type" value="Genomic_DNA"/>
</dbReference>
<dbReference type="EMBL" id="AP009048">
    <property type="protein sequence ID" value="BAA36104.1"/>
    <property type="molecule type" value="Genomic_DNA"/>
</dbReference>
<dbReference type="PIR" id="G64870">
    <property type="entry name" value="JC2265"/>
</dbReference>
<dbReference type="RefSeq" id="NP_415752.1">
    <property type="nucleotide sequence ID" value="NC_000913.3"/>
</dbReference>
<dbReference type="RefSeq" id="WP_000718995.1">
    <property type="nucleotide sequence ID" value="NZ_STEB01000005.1"/>
</dbReference>
<dbReference type="PDB" id="2E3D">
    <property type="method" value="X-ray"/>
    <property type="resolution" value="1.95 A"/>
    <property type="chains" value="A/B/C/D=1-302"/>
</dbReference>
<dbReference type="PDBsum" id="2E3D"/>
<dbReference type="SMR" id="P0AEP3"/>
<dbReference type="BioGRID" id="4260121">
    <property type="interactions" value="450"/>
</dbReference>
<dbReference type="BioGRID" id="850100">
    <property type="interactions" value="1"/>
</dbReference>
<dbReference type="DIP" id="DIP-35950N"/>
<dbReference type="FunCoup" id="P0AEP3">
    <property type="interactions" value="616"/>
</dbReference>
<dbReference type="IntAct" id="P0AEP3">
    <property type="interactions" value="3"/>
</dbReference>
<dbReference type="STRING" id="511145.b1236"/>
<dbReference type="jPOST" id="P0AEP3"/>
<dbReference type="PaxDb" id="511145-b1236"/>
<dbReference type="EnsemblBacteria" id="AAC74318">
    <property type="protein sequence ID" value="AAC74318"/>
    <property type="gene ID" value="b1236"/>
</dbReference>
<dbReference type="GeneID" id="93775302"/>
<dbReference type="GeneID" id="945730"/>
<dbReference type="KEGG" id="ecj:JW1224"/>
<dbReference type="KEGG" id="eco:b1236"/>
<dbReference type="KEGG" id="ecoc:C3026_07270"/>
<dbReference type="PATRIC" id="fig|1411691.4.peg.1049"/>
<dbReference type="EchoBASE" id="EB1295"/>
<dbReference type="eggNOG" id="COG1210">
    <property type="taxonomic scope" value="Bacteria"/>
</dbReference>
<dbReference type="HOGENOM" id="CLU_029499_1_1_6"/>
<dbReference type="InParanoid" id="P0AEP3"/>
<dbReference type="OMA" id="VTIMQTR"/>
<dbReference type="OrthoDB" id="9803306at2"/>
<dbReference type="PhylomeDB" id="P0AEP3"/>
<dbReference type="BioCyc" id="EcoCyc:GLUC1PURIDYLTRANS-MONOMER"/>
<dbReference type="BioCyc" id="MetaCyc:GLUC1PURIDYLTRANS-MONOMER"/>
<dbReference type="BRENDA" id="2.7.7.9">
    <property type="organism ID" value="2026"/>
</dbReference>
<dbReference type="SABIO-RK" id="P0AEP3"/>
<dbReference type="EvolutionaryTrace" id="P0AEP3"/>
<dbReference type="PRO" id="PR:P0AEP3"/>
<dbReference type="Proteomes" id="UP000000625">
    <property type="component" value="Chromosome"/>
</dbReference>
<dbReference type="GO" id="GO:0005829">
    <property type="term" value="C:cytosol"/>
    <property type="evidence" value="ECO:0000314"/>
    <property type="project" value="EcoCyc"/>
</dbReference>
<dbReference type="GO" id="GO:0032991">
    <property type="term" value="C:protein-containing complex"/>
    <property type="evidence" value="ECO:0000314"/>
    <property type="project" value="EcoCyc"/>
</dbReference>
<dbReference type="GO" id="GO:0042802">
    <property type="term" value="F:identical protein binding"/>
    <property type="evidence" value="ECO:0000314"/>
    <property type="project" value="EcoCyc"/>
</dbReference>
<dbReference type="GO" id="GO:0000287">
    <property type="term" value="F:magnesium ion binding"/>
    <property type="evidence" value="ECO:0000314"/>
    <property type="project" value="EcoCyc"/>
</dbReference>
<dbReference type="GO" id="GO:0003983">
    <property type="term" value="F:UTP:glucose-1-phosphate uridylyltransferase activity"/>
    <property type="evidence" value="ECO:0000314"/>
    <property type="project" value="EcoCyc"/>
</dbReference>
<dbReference type="GO" id="GO:0009242">
    <property type="term" value="P:colanic acid biosynthetic process"/>
    <property type="evidence" value="ECO:0000315"/>
    <property type="project" value="EcoCyc"/>
</dbReference>
<dbReference type="GO" id="GO:0033499">
    <property type="term" value="P:galactose catabolic process via UDP-galactose, Leloir pathway"/>
    <property type="evidence" value="ECO:0000315"/>
    <property type="project" value="EcoCyc"/>
</dbReference>
<dbReference type="GO" id="GO:0009244">
    <property type="term" value="P:lipopolysaccharide core region biosynthetic process"/>
    <property type="evidence" value="ECO:0000315"/>
    <property type="project" value="EcoCyc"/>
</dbReference>
<dbReference type="GO" id="GO:1900727">
    <property type="term" value="P:osmoregulated periplasmic glucan biosynthetic process"/>
    <property type="evidence" value="ECO:0000315"/>
    <property type="project" value="EcoCyc"/>
</dbReference>
<dbReference type="GO" id="GO:0006011">
    <property type="term" value="P:UDP-alpha-D-glucose metabolic process"/>
    <property type="evidence" value="ECO:0000315"/>
    <property type="project" value="EcoCyc"/>
</dbReference>
<dbReference type="CDD" id="cd02541">
    <property type="entry name" value="UGPase_prokaryotic"/>
    <property type="match status" value="1"/>
</dbReference>
<dbReference type="FunFam" id="3.90.550.10:FF:000008">
    <property type="entry name" value="UTP--glucose-1-phosphate uridylyltransferase"/>
    <property type="match status" value="1"/>
</dbReference>
<dbReference type="Gene3D" id="3.90.550.10">
    <property type="entry name" value="Spore Coat Polysaccharide Biosynthesis Protein SpsA, Chain A"/>
    <property type="match status" value="1"/>
</dbReference>
<dbReference type="InterPro" id="IPR005771">
    <property type="entry name" value="GalU_uridylyltTrfase_bac/arc"/>
</dbReference>
<dbReference type="InterPro" id="IPR005835">
    <property type="entry name" value="NTP_transferase_dom"/>
</dbReference>
<dbReference type="InterPro" id="IPR029044">
    <property type="entry name" value="Nucleotide-diphossugar_trans"/>
</dbReference>
<dbReference type="NCBIfam" id="TIGR01099">
    <property type="entry name" value="galU"/>
    <property type="match status" value="1"/>
</dbReference>
<dbReference type="NCBIfam" id="NF009928">
    <property type="entry name" value="PRK13389.1"/>
    <property type="match status" value="1"/>
</dbReference>
<dbReference type="PANTHER" id="PTHR43197">
    <property type="entry name" value="UTP--GLUCOSE-1-PHOSPHATE URIDYLYLTRANSFERASE"/>
    <property type="match status" value="1"/>
</dbReference>
<dbReference type="PANTHER" id="PTHR43197:SF1">
    <property type="entry name" value="UTP--GLUCOSE-1-PHOSPHATE URIDYLYLTRANSFERASE"/>
    <property type="match status" value="1"/>
</dbReference>
<dbReference type="Pfam" id="PF00483">
    <property type="entry name" value="NTP_transferase"/>
    <property type="match status" value="1"/>
</dbReference>
<dbReference type="SUPFAM" id="SSF53448">
    <property type="entry name" value="Nucleotide-diphospho-sugar transferases"/>
    <property type="match status" value="1"/>
</dbReference>
<protein>
    <recommendedName>
        <fullName evidence="4">UTP--glucose-1-phosphate uridylyltransferase</fullName>
        <ecNumber evidence="1">2.7.7.9</ecNumber>
    </recommendedName>
    <alternativeName>
        <fullName evidence="5">Alpha-D-glucosyl-1-phosphate uridylyltransferase</fullName>
    </alternativeName>
    <alternativeName>
        <fullName evidence="4">UDP-Glc PPase</fullName>
    </alternativeName>
    <alternativeName>
        <fullName evidence="4">UDP-glucose pyrophosphorylase</fullName>
        <shortName>UDPGP</shortName>
    </alternativeName>
    <alternativeName>
        <fullName>Uridine diphosphoglucose pyrophosphorylase</fullName>
    </alternativeName>
</protein>
<name>GALU_ECOLI</name>